<dbReference type="EMBL" id="FM204884">
    <property type="protein sequence ID" value="CAW97672.1"/>
    <property type="molecule type" value="Genomic_DNA"/>
</dbReference>
<dbReference type="SMR" id="C0ME21"/>
<dbReference type="KEGG" id="seq:SZO_00660"/>
<dbReference type="eggNOG" id="COG0256">
    <property type="taxonomic scope" value="Bacteria"/>
</dbReference>
<dbReference type="HOGENOM" id="CLU_098841_0_1_9"/>
<dbReference type="Proteomes" id="UP000001368">
    <property type="component" value="Chromosome"/>
</dbReference>
<dbReference type="GO" id="GO:0022625">
    <property type="term" value="C:cytosolic large ribosomal subunit"/>
    <property type="evidence" value="ECO:0007669"/>
    <property type="project" value="TreeGrafter"/>
</dbReference>
<dbReference type="GO" id="GO:0008097">
    <property type="term" value="F:5S rRNA binding"/>
    <property type="evidence" value="ECO:0007669"/>
    <property type="project" value="TreeGrafter"/>
</dbReference>
<dbReference type="GO" id="GO:0003735">
    <property type="term" value="F:structural constituent of ribosome"/>
    <property type="evidence" value="ECO:0007669"/>
    <property type="project" value="InterPro"/>
</dbReference>
<dbReference type="GO" id="GO:0006412">
    <property type="term" value="P:translation"/>
    <property type="evidence" value="ECO:0007669"/>
    <property type="project" value="UniProtKB-UniRule"/>
</dbReference>
<dbReference type="CDD" id="cd00432">
    <property type="entry name" value="Ribosomal_L18_L5e"/>
    <property type="match status" value="1"/>
</dbReference>
<dbReference type="FunFam" id="3.30.420.100:FF:000001">
    <property type="entry name" value="50S ribosomal protein L18"/>
    <property type="match status" value="1"/>
</dbReference>
<dbReference type="Gene3D" id="3.30.420.100">
    <property type="match status" value="1"/>
</dbReference>
<dbReference type="HAMAP" id="MF_01337_B">
    <property type="entry name" value="Ribosomal_uL18_B"/>
    <property type="match status" value="1"/>
</dbReference>
<dbReference type="InterPro" id="IPR004389">
    <property type="entry name" value="Ribosomal_uL18_bac-type"/>
</dbReference>
<dbReference type="InterPro" id="IPR005484">
    <property type="entry name" value="Ribosomal_uL18_bac/euk"/>
</dbReference>
<dbReference type="NCBIfam" id="TIGR00060">
    <property type="entry name" value="L18_bact"/>
    <property type="match status" value="1"/>
</dbReference>
<dbReference type="PANTHER" id="PTHR12899">
    <property type="entry name" value="39S RIBOSOMAL PROTEIN L18, MITOCHONDRIAL"/>
    <property type="match status" value="1"/>
</dbReference>
<dbReference type="PANTHER" id="PTHR12899:SF3">
    <property type="entry name" value="LARGE RIBOSOMAL SUBUNIT PROTEIN UL18M"/>
    <property type="match status" value="1"/>
</dbReference>
<dbReference type="Pfam" id="PF00861">
    <property type="entry name" value="Ribosomal_L18p"/>
    <property type="match status" value="1"/>
</dbReference>
<dbReference type="SUPFAM" id="SSF53137">
    <property type="entry name" value="Translational machinery components"/>
    <property type="match status" value="1"/>
</dbReference>
<reference key="1">
    <citation type="journal article" date="2009" name="PLoS Pathog.">
        <title>Genomic evidence for the evolution of Streptococcus equi: host restriction, increased virulence, and genetic exchange with human pathogens.</title>
        <authorList>
            <person name="Holden M.T.G."/>
            <person name="Heather Z."/>
            <person name="Paillot R."/>
            <person name="Steward K.F."/>
            <person name="Webb K."/>
            <person name="Ainslie F."/>
            <person name="Jourdan T."/>
            <person name="Bason N.C."/>
            <person name="Holroyd N.E."/>
            <person name="Mungall K."/>
            <person name="Quail M.A."/>
            <person name="Sanders M."/>
            <person name="Simmonds M."/>
            <person name="Willey D."/>
            <person name="Brooks K."/>
            <person name="Aanensen D.M."/>
            <person name="Spratt B.G."/>
            <person name="Jolley K.A."/>
            <person name="Maiden M.C.J."/>
            <person name="Kehoe M."/>
            <person name="Chanter N."/>
            <person name="Bentley S.D."/>
            <person name="Robinson C."/>
            <person name="Maskell D.J."/>
            <person name="Parkhill J."/>
            <person name="Waller A.S."/>
        </authorList>
    </citation>
    <scope>NUCLEOTIDE SEQUENCE [LARGE SCALE GENOMIC DNA]</scope>
    <source>
        <strain>H70</strain>
    </source>
</reference>
<gene>
    <name evidence="1" type="primary">rplR</name>
    <name type="ordered locus">SZO_00660</name>
</gene>
<name>RL18_STRS7</name>
<evidence type="ECO:0000255" key="1">
    <source>
        <dbReference type="HAMAP-Rule" id="MF_01337"/>
    </source>
</evidence>
<evidence type="ECO:0000256" key="2">
    <source>
        <dbReference type="SAM" id="MobiDB-lite"/>
    </source>
</evidence>
<evidence type="ECO:0000305" key="3"/>
<feature type="chain" id="PRO_1000214683" description="Large ribosomal subunit protein uL18">
    <location>
        <begin position="1"/>
        <end position="118"/>
    </location>
</feature>
<feature type="region of interest" description="Disordered" evidence="2">
    <location>
        <begin position="1"/>
        <end position="26"/>
    </location>
</feature>
<feature type="compositionally biased region" description="Basic residues" evidence="2">
    <location>
        <begin position="10"/>
        <end position="20"/>
    </location>
</feature>
<keyword id="KW-0687">Ribonucleoprotein</keyword>
<keyword id="KW-0689">Ribosomal protein</keyword>
<keyword id="KW-0694">RNA-binding</keyword>
<keyword id="KW-0699">rRNA-binding</keyword>
<accession>C0ME21</accession>
<sequence length="118" mass="12880">MISKPDKNKIRQKRHRRVRGKLSGTADRPRLNVFRSNTGIYAQVIDDVAGVTLASASTLDKEVSKGTKTEQAVVVGKLVAERAVAKGISEVVFDRGGYLYHGRVKALADAARENGLKF</sequence>
<proteinExistence type="inferred from homology"/>
<protein>
    <recommendedName>
        <fullName evidence="1">Large ribosomal subunit protein uL18</fullName>
    </recommendedName>
    <alternativeName>
        <fullName evidence="3">50S ribosomal protein L18</fullName>
    </alternativeName>
</protein>
<organism>
    <name type="scientific">Streptococcus equi subsp. zooepidemicus (strain H70)</name>
    <dbReference type="NCBI Taxonomy" id="553483"/>
    <lineage>
        <taxon>Bacteria</taxon>
        <taxon>Bacillati</taxon>
        <taxon>Bacillota</taxon>
        <taxon>Bacilli</taxon>
        <taxon>Lactobacillales</taxon>
        <taxon>Streptococcaceae</taxon>
        <taxon>Streptococcus</taxon>
    </lineage>
</organism>
<comment type="function">
    <text evidence="1">This is one of the proteins that bind and probably mediate the attachment of the 5S RNA into the large ribosomal subunit, where it forms part of the central protuberance.</text>
</comment>
<comment type="subunit">
    <text evidence="1">Part of the 50S ribosomal subunit; part of the 5S rRNA/L5/L18/L25 subcomplex. Contacts the 5S and 23S rRNAs.</text>
</comment>
<comment type="similarity">
    <text evidence="1">Belongs to the universal ribosomal protein uL18 family.</text>
</comment>